<evidence type="ECO:0000255" key="1">
    <source>
        <dbReference type="HAMAP-Rule" id="MF_01361"/>
    </source>
</evidence>
<gene>
    <name type="ordered locus">OCAR_5266</name>
    <name type="ordered locus">OCA5_c27040</name>
</gene>
<reference key="1">
    <citation type="journal article" date="2008" name="J. Bacteriol.">
        <title>Genome sequence of the chemolithoautotrophic bacterium Oligotropha carboxidovorans OM5T.</title>
        <authorList>
            <person name="Paul D."/>
            <person name="Bridges S."/>
            <person name="Burgess S.C."/>
            <person name="Dandass Y."/>
            <person name="Lawrence M.L."/>
        </authorList>
    </citation>
    <scope>NUCLEOTIDE SEQUENCE [LARGE SCALE GENOMIC DNA]</scope>
    <source>
        <strain>ATCC 49405 / DSM 1227 / KCTC 32145 / OM5</strain>
    </source>
</reference>
<reference key="2">
    <citation type="journal article" date="2011" name="J. Bacteriol.">
        <title>Complete genome sequences of the chemolithoautotrophic Oligotropha carboxidovorans strains OM4 and OM5.</title>
        <authorList>
            <person name="Volland S."/>
            <person name="Rachinger M."/>
            <person name="Strittmatter A."/>
            <person name="Daniel R."/>
            <person name="Gottschalk G."/>
            <person name="Meyer O."/>
        </authorList>
    </citation>
    <scope>NUCLEOTIDE SEQUENCE [LARGE SCALE GENOMIC DNA]</scope>
    <source>
        <strain>ATCC 49405 / DSM 1227 / KCTC 32145 / OM5</strain>
    </source>
</reference>
<accession>B6JB57</accession>
<accession>F8BV43</accession>
<organism>
    <name type="scientific">Afipia carboxidovorans (strain ATCC 49405 / DSM 1227 / KCTC 32145 / OM5)</name>
    <name type="common">Oligotropha carboxidovorans</name>
    <dbReference type="NCBI Taxonomy" id="504832"/>
    <lineage>
        <taxon>Bacteria</taxon>
        <taxon>Pseudomonadati</taxon>
        <taxon>Pseudomonadota</taxon>
        <taxon>Alphaproteobacteria</taxon>
        <taxon>Hyphomicrobiales</taxon>
        <taxon>Nitrobacteraceae</taxon>
        <taxon>Afipia</taxon>
    </lineage>
</organism>
<sequence>MLGWVVTFLIIALVAGLLGFGGIAGASIEIAKIVFFIAIVLFAVSAVVGLMRGRRPMV</sequence>
<keyword id="KW-1003">Cell membrane</keyword>
<keyword id="KW-0472">Membrane</keyword>
<keyword id="KW-1185">Reference proteome</keyword>
<keyword id="KW-0812">Transmembrane</keyword>
<keyword id="KW-1133">Transmembrane helix</keyword>
<dbReference type="EMBL" id="CP001196">
    <property type="protein sequence ID" value="ACI92398.1"/>
    <property type="molecule type" value="Genomic_DNA"/>
</dbReference>
<dbReference type="EMBL" id="CP002826">
    <property type="protein sequence ID" value="AEI07398.1"/>
    <property type="molecule type" value="Genomic_DNA"/>
</dbReference>
<dbReference type="STRING" id="504832.OCA5_c27040"/>
<dbReference type="KEGG" id="oca:OCAR_5266"/>
<dbReference type="KEGG" id="ocg:OCA5_c27040"/>
<dbReference type="eggNOG" id="COG5487">
    <property type="taxonomic scope" value="Bacteria"/>
</dbReference>
<dbReference type="HOGENOM" id="CLU_187346_1_0_5"/>
<dbReference type="OrthoDB" id="1374391at2"/>
<dbReference type="Proteomes" id="UP000007730">
    <property type="component" value="Chromosome"/>
</dbReference>
<dbReference type="GO" id="GO:0005886">
    <property type="term" value="C:plasma membrane"/>
    <property type="evidence" value="ECO:0007669"/>
    <property type="project" value="UniProtKB-SubCell"/>
</dbReference>
<dbReference type="HAMAP" id="MF_01361">
    <property type="entry name" value="UPF0391"/>
    <property type="match status" value="1"/>
</dbReference>
<dbReference type="InterPro" id="IPR009760">
    <property type="entry name" value="DUF1328"/>
</dbReference>
<dbReference type="NCBIfam" id="NF010228">
    <property type="entry name" value="PRK13682.1-3"/>
    <property type="match status" value="1"/>
</dbReference>
<dbReference type="NCBIfam" id="NF010229">
    <property type="entry name" value="PRK13682.1-4"/>
    <property type="match status" value="1"/>
</dbReference>
<dbReference type="Pfam" id="PF07043">
    <property type="entry name" value="DUF1328"/>
    <property type="match status" value="1"/>
</dbReference>
<dbReference type="PIRSF" id="PIRSF036466">
    <property type="entry name" value="UCP036466"/>
    <property type="match status" value="1"/>
</dbReference>
<name>Y5266_AFIC5</name>
<comment type="subcellular location">
    <subcellularLocation>
        <location evidence="1">Cell membrane</location>
        <topology evidence="1">Multi-pass membrane protein</topology>
    </subcellularLocation>
</comment>
<comment type="similarity">
    <text evidence="1">Belongs to the UPF0391 family.</text>
</comment>
<feature type="chain" id="PRO_1000143716" description="UPF0391 membrane protein OCAR_5266/OCA5_c27040">
    <location>
        <begin position="1"/>
        <end position="58"/>
    </location>
</feature>
<feature type="transmembrane region" description="Helical" evidence="1">
    <location>
        <begin position="4"/>
        <end position="24"/>
    </location>
</feature>
<feature type="transmembrane region" description="Helical" evidence="1">
    <location>
        <begin position="30"/>
        <end position="50"/>
    </location>
</feature>
<protein>
    <recommendedName>
        <fullName evidence="1">UPF0391 membrane protein OCAR_5266/OCA5_c27040</fullName>
    </recommendedName>
</protein>
<proteinExistence type="inferred from homology"/>